<evidence type="ECO:0000255" key="1">
    <source>
        <dbReference type="HAMAP-Rule" id="MF_00004"/>
    </source>
</evidence>
<protein>
    <recommendedName>
        <fullName evidence="1">Adenine phosphoribosyltransferase</fullName>
        <shortName evidence="1">APRT</shortName>
        <ecNumber evidence="1">2.4.2.7</ecNumber>
    </recommendedName>
</protein>
<accession>Q5FSN7</accession>
<feature type="chain" id="PRO_0000149389" description="Adenine phosphoribosyltransferase">
    <location>
        <begin position="1"/>
        <end position="179"/>
    </location>
</feature>
<reference key="1">
    <citation type="journal article" date="2005" name="Nat. Biotechnol.">
        <title>Complete genome sequence of the acetic acid bacterium Gluconobacter oxydans.</title>
        <authorList>
            <person name="Prust C."/>
            <person name="Hoffmeister M."/>
            <person name="Liesegang H."/>
            <person name="Wiezer A."/>
            <person name="Fricke W.F."/>
            <person name="Ehrenreich A."/>
            <person name="Gottschalk G."/>
            <person name="Deppenmeier U."/>
        </authorList>
    </citation>
    <scope>NUCLEOTIDE SEQUENCE [LARGE SCALE GENOMIC DNA]</scope>
    <source>
        <strain>621H</strain>
    </source>
</reference>
<name>APT_GLUOX</name>
<proteinExistence type="inferred from homology"/>
<comment type="function">
    <text evidence="1">Catalyzes a salvage reaction resulting in the formation of AMP, that is energically less costly than de novo synthesis.</text>
</comment>
<comment type="catalytic activity">
    <reaction evidence="1">
        <text>AMP + diphosphate = 5-phospho-alpha-D-ribose 1-diphosphate + adenine</text>
        <dbReference type="Rhea" id="RHEA:16609"/>
        <dbReference type="ChEBI" id="CHEBI:16708"/>
        <dbReference type="ChEBI" id="CHEBI:33019"/>
        <dbReference type="ChEBI" id="CHEBI:58017"/>
        <dbReference type="ChEBI" id="CHEBI:456215"/>
        <dbReference type="EC" id="2.4.2.7"/>
    </reaction>
</comment>
<comment type="pathway">
    <text evidence="1">Purine metabolism; AMP biosynthesis via salvage pathway; AMP from adenine: step 1/1.</text>
</comment>
<comment type="subunit">
    <text evidence="1">Homodimer.</text>
</comment>
<comment type="subcellular location">
    <subcellularLocation>
        <location evidence="1">Cytoplasm</location>
    </subcellularLocation>
</comment>
<comment type="similarity">
    <text evidence="1">Belongs to the purine/pyrimidine phosphoribosyltransferase family.</text>
</comment>
<gene>
    <name evidence="1" type="primary">apt</name>
    <name type="ordered locus">GOX0835</name>
</gene>
<dbReference type="EC" id="2.4.2.7" evidence="1"/>
<dbReference type="EMBL" id="CP000009">
    <property type="protein sequence ID" value="AAW60609.1"/>
    <property type="molecule type" value="Genomic_DNA"/>
</dbReference>
<dbReference type="RefSeq" id="WP_011252405.1">
    <property type="nucleotide sequence ID" value="NC_006677.1"/>
</dbReference>
<dbReference type="SMR" id="Q5FSN7"/>
<dbReference type="STRING" id="290633.GOX0835"/>
<dbReference type="KEGG" id="gox:GOX0835"/>
<dbReference type="eggNOG" id="COG0503">
    <property type="taxonomic scope" value="Bacteria"/>
</dbReference>
<dbReference type="HOGENOM" id="CLU_063339_3_3_5"/>
<dbReference type="UniPathway" id="UPA00588">
    <property type="reaction ID" value="UER00646"/>
</dbReference>
<dbReference type="Proteomes" id="UP000006375">
    <property type="component" value="Chromosome"/>
</dbReference>
<dbReference type="GO" id="GO:0005737">
    <property type="term" value="C:cytoplasm"/>
    <property type="evidence" value="ECO:0007669"/>
    <property type="project" value="UniProtKB-SubCell"/>
</dbReference>
<dbReference type="GO" id="GO:0002055">
    <property type="term" value="F:adenine binding"/>
    <property type="evidence" value="ECO:0007669"/>
    <property type="project" value="TreeGrafter"/>
</dbReference>
<dbReference type="GO" id="GO:0003999">
    <property type="term" value="F:adenine phosphoribosyltransferase activity"/>
    <property type="evidence" value="ECO:0007669"/>
    <property type="project" value="UniProtKB-UniRule"/>
</dbReference>
<dbReference type="GO" id="GO:0016208">
    <property type="term" value="F:AMP binding"/>
    <property type="evidence" value="ECO:0007669"/>
    <property type="project" value="TreeGrafter"/>
</dbReference>
<dbReference type="GO" id="GO:0006168">
    <property type="term" value="P:adenine salvage"/>
    <property type="evidence" value="ECO:0007669"/>
    <property type="project" value="InterPro"/>
</dbReference>
<dbReference type="GO" id="GO:0044209">
    <property type="term" value="P:AMP salvage"/>
    <property type="evidence" value="ECO:0007669"/>
    <property type="project" value="UniProtKB-UniRule"/>
</dbReference>
<dbReference type="GO" id="GO:0006166">
    <property type="term" value="P:purine ribonucleoside salvage"/>
    <property type="evidence" value="ECO:0007669"/>
    <property type="project" value="UniProtKB-KW"/>
</dbReference>
<dbReference type="CDD" id="cd06223">
    <property type="entry name" value="PRTases_typeI"/>
    <property type="match status" value="1"/>
</dbReference>
<dbReference type="FunFam" id="3.40.50.2020:FF:000004">
    <property type="entry name" value="Adenine phosphoribosyltransferase"/>
    <property type="match status" value="1"/>
</dbReference>
<dbReference type="Gene3D" id="3.40.50.2020">
    <property type="match status" value="1"/>
</dbReference>
<dbReference type="HAMAP" id="MF_00004">
    <property type="entry name" value="Aden_phosphoribosyltr"/>
    <property type="match status" value="1"/>
</dbReference>
<dbReference type="InterPro" id="IPR005764">
    <property type="entry name" value="Ade_phspho_trans"/>
</dbReference>
<dbReference type="InterPro" id="IPR000836">
    <property type="entry name" value="PRibTrfase_dom"/>
</dbReference>
<dbReference type="InterPro" id="IPR029057">
    <property type="entry name" value="PRTase-like"/>
</dbReference>
<dbReference type="InterPro" id="IPR050054">
    <property type="entry name" value="UPRTase/APRTase"/>
</dbReference>
<dbReference type="NCBIfam" id="TIGR01090">
    <property type="entry name" value="apt"/>
    <property type="match status" value="1"/>
</dbReference>
<dbReference type="NCBIfam" id="NF002634">
    <property type="entry name" value="PRK02304.1-3"/>
    <property type="match status" value="1"/>
</dbReference>
<dbReference type="NCBIfam" id="NF002636">
    <property type="entry name" value="PRK02304.1-5"/>
    <property type="match status" value="1"/>
</dbReference>
<dbReference type="PANTHER" id="PTHR32315">
    <property type="entry name" value="ADENINE PHOSPHORIBOSYLTRANSFERASE"/>
    <property type="match status" value="1"/>
</dbReference>
<dbReference type="PANTHER" id="PTHR32315:SF3">
    <property type="entry name" value="ADENINE PHOSPHORIBOSYLTRANSFERASE"/>
    <property type="match status" value="1"/>
</dbReference>
<dbReference type="Pfam" id="PF00156">
    <property type="entry name" value="Pribosyltran"/>
    <property type="match status" value="1"/>
</dbReference>
<dbReference type="SUPFAM" id="SSF53271">
    <property type="entry name" value="PRTase-like"/>
    <property type="match status" value="1"/>
</dbReference>
<dbReference type="PROSITE" id="PS00103">
    <property type="entry name" value="PUR_PYR_PR_TRANSFER"/>
    <property type="match status" value="1"/>
</dbReference>
<sequence length="179" mass="19557">MSFQDPQPLDLKNYIREIPDFPKRGILFYDISTLIRSPDAWQVATARLARVIAAWQPDILAGIESRGFLTAAPLALRLGCGFTMLRKPGKLPGKTISLKYGLEYGEDELHIQADAIKPGQRVVVLDDLLATGGTLAASIDLLRKVGAEVVGASVLIELADLKGREKLDVPLNALMTYDE</sequence>
<organism>
    <name type="scientific">Gluconobacter oxydans (strain 621H)</name>
    <name type="common">Gluconobacter suboxydans</name>
    <dbReference type="NCBI Taxonomy" id="290633"/>
    <lineage>
        <taxon>Bacteria</taxon>
        <taxon>Pseudomonadati</taxon>
        <taxon>Pseudomonadota</taxon>
        <taxon>Alphaproteobacteria</taxon>
        <taxon>Acetobacterales</taxon>
        <taxon>Acetobacteraceae</taxon>
        <taxon>Gluconobacter</taxon>
    </lineage>
</organism>
<keyword id="KW-0963">Cytoplasm</keyword>
<keyword id="KW-0328">Glycosyltransferase</keyword>
<keyword id="KW-0660">Purine salvage</keyword>
<keyword id="KW-1185">Reference proteome</keyword>
<keyword id="KW-0808">Transferase</keyword>